<accession>B6YQ74</accession>
<feature type="chain" id="PRO_1000141959" description="Large ribosomal subunit protein uL24">
    <location>
        <begin position="1"/>
        <end position="106"/>
    </location>
</feature>
<organism>
    <name type="scientific">Azobacteroides pseudotrichonymphae genomovar. CFP2</name>
    <dbReference type="NCBI Taxonomy" id="511995"/>
    <lineage>
        <taxon>Bacteria</taxon>
        <taxon>Pseudomonadati</taxon>
        <taxon>Bacteroidota</taxon>
        <taxon>Bacteroidia</taxon>
        <taxon>Bacteroidales</taxon>
        <taxon>Candidatus Azobacteroides</taxon>
    </lineage>
</organism>
<reference key="1">
    <citation type="journal article" date="2008" name="Science">
        <title>Genome of an endosymbiont coupling N2 fixation to cellulolysis within RT protist cells in termite gut.</title>
        <authorList>
            <person name="Hongoh Y."/>
            <person name="Sharma V.K."/>
            <person name="Prakash T."/>
            <person name="Noda S."/>
            <person name="Toh H."/>
            <person name="Taylor T.D."/>
            <person name="Kudo T."/>
            <person name="Sakaki Y."/>
            <person name="Toyoda A."/>
            <person name="Hattori M."/>
            <person name="Ohkuma M."/>
        </authorList>
    </citation>
    <scope>NUCLEOTIDE SEQUENCE [LARGE SCALE GENOMIC DNA]</scope>
</reference>
<protein>
    <recommendedName>
        <fullName evidence="1">Large ribosomal subunit protein uL24</fullName>
    </recommendedName>
    <alternativeName>
        <fullName evidence="2">50S ribosomal protein L24</fullName>
    </alternativeName>
</protein>
<keyword id="KW-1185">Reference proteome</keyword>
<keyword id="KW-0687">Ribonucleoprotein</keyword>
<keyword id="KW-0689">Ribosomal protein</keyword>
<keyword id="KW-0694">RNA-binding</keyword>
<keyword id="KW-0699">rRNA-binding</keyword>
<proteinExistence type="inferred from homology"/>
<comment type="function">
    <text evidence="1">One of two assembly initiator proteins, it binds directly to the 5'-end of the 23S rRNA, where it nucleates assembly of the 50S subunit.</text>
</comment>
<comment type="function">
    <text evidence="1">One of the proteins that surrounds the polypeptide exit tunnel on the outside of the subunit.</text>
</comment>
<comment type="subunit">
    <text evidence="1">Part of the 50S ribosomal subunit.</text>
</comment>
<comment type="similarity">
    <text evidence="1">Belongs to the universal ribosomal protein uL24 family.</text>
</comment>
<dbReference type="EMBL" id="AP010656">
    <property type="protein sequence ID" value="BAG83346.1"/>
    <property type="molecule type" value="Genomic_DNA"/>
</dbReference>
<dbReference type="RefSeq" id="WP_012573107.1">
    <property type="nucleotide sequence ID" value="NC_011565.1"/>
</dbReference>
<dbReference type="SMR" id="B6YQ74"/>
<dbReference type="STRING" id="511995.CFPG_083"/>
<dbReference type="KEGG" id="aps:CFPG_083"/>
<dbReference type="eggNOG" id="COG0198">
    <property type="taxonomic scope" value="Bacteria"/>
</dbReference>
<dbReference type="HOGENOM" id="CLU_093315_2_3_10"/>
<dbReference type="OrthoDB" id="9807419at2"/>
<dbReference type="Proteomes" id="UP000000723">
    <property type="component" value="Chromosome"/>
</dbReference>
<dbReference type="GO" id="GO:1990904">
    <property type="term" value="C:ribonucleoprotein complex"/>
    <property type="evidence" value="ECO:0007669"/>
    <property type="project" value="UniProtKB-KW"/>
</dbReference>
<dbReference type="GO" id="GO:0005840">
    <property type="term" value="C:ribosome"/>
    <property type="evidence" value="ECO:0007669"/>
    <property type="project" value="UniProtKB-KW"/>
</dbReference>
<dbReference type="GO" id="GO:0019843">
    <property type="term" value="F:rRNA binding"/>
    <property type="evidence" value="ECO:0007669"/>
    <property type="project" value="UniProtKB-UniRule"/>
</dbReference>
<dbReference type="GO" id="GO:0003735">
    <property type="term" value="F:structural constituent of ribosome"/>
    <property type="evidence" value="ECO:0007669"/>
    <property type="project" value="InterPro"/>
</dbReference>
<dbReference type="GO" id="GO:0006412">
    <property type="term" value="P:translation"/>
    <property type="evidence" value="ECO:0007669"/>
    <property type="project" value="UniProtKB-UniRule"/>
</dbReference>
<dbReference type="CDD" id="cd06089">
    <property type="entry name" value="KOW_RPL26"/>
    <property type="match status" value="1"/>
</dbReference>
<dbReference type="Gene3D" id="2.30.30.30">
    <property type="match status" value="1"/>
</dbReference>
<dbReference type="HAMAP" id="MF_01326_B">
    <property type="entry name" value="Ribosomal_uL24_B"/>
    <property type="match status" value="1"/>
</dbReference>
<dbReference type="InterPro" id="IPR005824">
    <property type="entry name" value="KOW"/>
</dbReference>
<dbReference type="InterPro" id="IPR014722">
    <property type="entry name" value="Rib_uL2_dom2"/>
</dbReference>
<dbReference type="InterPro" id="IPR003256">
    <property type="entry name" value="Ribosomal_uL24"/>
</dbReference>
<dbReference type="InterPro" id="IPR041988">
    <property type="entry name" value="Ribosomal_uL24_KOW"/>
</dbReference>
<dbReference type="InterPro" id="IPR008991">
    <property type="entry name" value="Translation_prot_SH3-like_sf"/>
</dbReference>
<dbReference type="NCBIfam" id="TIGR01079">
    <property type="entry name" value="rplX_bact"/>
    <property type="match status" value="1"/>
</dbReference>
<dbReference type="PANTHER" id="PTHR12903">
    <property type="entry name" value="MITOCHONDRIAL RIBOSOMAL PROTEIN L24"/>
    <property type="match status" value="1"/>
</dbReference>
<dbReference type="Pfam" id="PF00467">
    <property type="entry name" value="KOW"/>
    <property type="match status" value="1"/>
</dbReference>
<dbReference type="Pfam" id="PF17136">
    <property type="entry name" value="ribosomal_L24"/>
    <property type="match status" value="1"/>
</dbReference>
<dbReference type="SMART" id="SM00739">
    <property type="entry name" value="KOW"/>
    <property type="match status" value="1"/>
</dbReference>
<dbReference type="SUPFAM" id="SSF50104">
    <property type="entry name" value="Translation proteins SH3-like domain"/>
    <property type="match status" value="1"/>
</dbReference>
<name>RL24_AZOPC</name>
<sequence>MNKLHIKKGDTVYVNAGDYKGKIGCVLKVFLGKQRALVEGVNIISKTIKPSAKNPQGGFEKKEASIHISNLNVLDPKTGKPVRIGRKLGERGMLIRFSKKSGDEIK</sequence>
<evidence type="ECO:0000255" key="1">
    <source>
        <dbReference type="HAMAP-Rule" id="MF_01326"/>
    </source>
</evidence>
<evidence type="ECO:0000305" key="2"/>
<gene>
    <name evidence="1" type="primary">rplX</name>
    <name type="ordered locus">CFPG_083</name>
</gene>